<accession>Q8P8V9</accession>
<protein>
    <recommendedName>
        <fullName evidence="1">Lipoprotein-releasing system ATP-binding protein LolD</fullName>
        <ecNumber evidence="1">7.6.2.-</ecNumber>
    </recommendedName>
</protein>
<dbReference type="EC" id="7.6.2.-" evidence="1"/>
<dbReference type="EMBL" id="AE008922">
    <property type="protein sequence ID" value="AAM41410.1"/>
    <property type="status" value="ALT_INIT"/>
    <property type="molecule type" value="Genomic_DNA"/>
</dbReference>
<dbReference type="RefSeq" id="NP_637486.1">
    <property type="nucleotide sequence ID" value="NC_003902.1"/>
</dbReference>
<dbReference type="SMR" id="Q8P8V9"/>
<dbReference type="STRING" id="190485.XCC2125"/>
<dbReference type="EnsemblBacteria" id="AAM41410">
    <property type="protein sequence ID" value="AAM41410"/>
    <property type="gene ID" value="XCC2125"/>
</dbReference>
<dbReference type="KEGG" id="xcc:XCC2125"/>
<dbReference type="PATRIC" id="fig|190485.4.peg.2275"/>
<dbReference type="eggNOG" id="COG1136">
    <property type="taxonomic scope" value="Bacteria"/>
</dbReference>
<dbReference type="HOGENOM" id="CLU_000604_1_22_6"/>
<dbReference type="OrthoDB" id="9783924at2"/>
<dbReference type="Proteomes" id="UP000001010">
    <property type="component" value="Chromosome"/>
</dbReference>
<dbReference type="GO" id="GO:0005886">
    <property type="term" value="C:plasma membrane"/>
    <property type="evidence" value="ECO:0000318"/>
    <property type="project" value="GO_Central"/>
</dbReference>
<dbReference type="GO" id="GO:0005524">
    <property type="term" value="F:ATP binding"/>
    <property type="evidence" value="ECO:0007669"/>
    <property type="project" value="UniProtKB-KW"/>
</dbReference>
<dbReference type="GO" id="GO:0016887">
    <property type="term" value="F:ATP hydrolysis activity"/>
    <property type="evidence" value="ECO:0007669"/>
    <property type="project" value="InterPro"/>
</dbReference>
<dbReference type="GO" id="GO:0022857">
    <property type="term" value="F:transmembrane transporter activity"/>
    <property type="evidence" value="ECO:0000318"/>
    <property type="project" value="GO_Central"/>
</dbReference>
<dbReference type="GO" id="GO:0044874">
    <property type="term" value="P:lipoprotein localization to outer membrane"/>
    <property type="evidence" value="ECO:0000318"/>
    <property type="project" value="GO_Central"/>
</dbReference>
<dbReference type="GO" id="GO:0089705">
    <property type="term" value="P:protein localization to outer membrane"/>
    <property type="evidence" value="ECO:0000318"/>
    <property type="project" value="GO_Central"/>
</dbReference>
<dbReference type="GO" id="GO:0055085">
    <property type="term" value="P:transmembrane transport"/>
    <property type="evidence" value="ECO:0000318"/>
    <property type="project" value="GO_Central"/>
</dbReference>
<dbReference type="CDD" id="cd03255">
    <property type="entry name" value="ABC_MJ0796_LolCDE_FtsE"/>
    <property type="match status" value="1"/>
</dbReference>
<dbReference type="FunFam" id="3.40.50.300:FF:000230">
    <property type="entry name" value="Lipoprotein-releasing system ATP-binding protein LolD"/>
    <property type="match status" value="1"/>
</dbReference>
<dbReference type="Gene3D" id="3.40.50.300">
    <property type="entry name" value="P-loop containing nucleotide triphosphate hydrolases"/>
    <property type="match status" value="1"/>
</dbReference>
<dbReference type="InterPro" id="IPR003593">
    <property type="entry name" value="AAA+_ATPase"/>
</dbReference>
<dbReference type="InterPro" id="IPR003439">
    <property type="entry name" value="ABC_transporter-like_ATP-bd"/>
</dbReference>
<dbReference type="InterPro" id="IPR015854">
    <property type="entry name" value="ABC_transpr_LolD-like"/>
</dbReference>
<dbReference type="InterPro" id="IPR011924">
    <property type="entry name" value="LolD_lipo_ATP-bd"/>
</dbReference>
<dbReference type="InterPro" id="IPR017911">
    <property type="entry name" value="MacB-like_ATP-bd"/>
</dbReference>
<dbReference type="InterPro" id="IPR027417">
    <property type="entry name" value="P-loop_NTPase"/>
</dbReference>
<dbReference type="NCBIfam" id="TIGR02211">
    <property type="entry name" value="LolD_lipo_ex"/>
    <property type="match status" value="1"/>
</dbReference>
<dbReference type="PANTHER" id="PTHR24220">
    <property type="entry name" value="IMPORT ATP-BINDING PROTEIN"/>
    <property type="match status" value="1"/>
</dbReference>
<dbReference type="PANTHER" id="PTHR24220:SF689">
    <property type="entry name" value="LIPOPROTEIN-RELEASING SYSTEM ATP-BINDING PROTEIN LOLD"/>
    <property type="match status" value="1"/>
</dbReference>
<dbReference type="Pfam" id="PF00005">
    <property type="entry name" value="ABC_tran"/>
    <property type="match status" value="1"/>
</dbReference>
<dbReference type="SMART" id="SM00382">
    <property type="entry name" value="AAA"/>
    <property type="match status" value="1"/>
</dbReference>
<dbReference type="SUPFAM" id="SSF52540">
    <property type="entry name" value="P-loop containing nucleoside triphosphate hydrolases"/>
    <property type="match status" value="1"/>
</dbReference>
<dbReference type="PROSITE" id="PS50893">
    <property type="entry name" value="ABC_TRANSPORTER_2"/>
    <property type="match status" value="1"/>
</dbReference>
<dbReference type="PROSITE" id="PS51244">
    <property type="entry name" value="LOLD"/>
    <property type="match status" value="1"/>
</dbReference>
<feature type="chain" id="PRO_0000092469" description="Lipoprotein-releasing system ATP-binding protein LolD">
    <location>
        <begin position="1"/>
        <end position="239"/>
    </location>
</feature>
<feature type="domain" description="ABC transporter" evidence="1">
    <location>
        <begin position="14"/>
        <end position="239"/>
    </location>
</feature>
<feature type="binding site" evidence="1">
    <location>
        <begin position="50"/>
        <end position="57"/>
    </location>
    <ligand>
        <name>ATP</name>
        <dbReference type="ChEBI" id="CHEBI:30616"/>
    </ligand>
</feature>
<name>LOLD_XANCP</name>
<reference key="1">
    <citation type="journal article" date="2002" name="Nature">
        <title>Comparison of the genomes of two Xanthomonas pathogens with differing host specificities.</title>
        <authorList>
            <person name="da Silva A.C.R."/>
            <person name="Ferro J.A."/>
            <person name="Reinach F.C."/>
            <person name="Farah C.S."/>
            <person name="Furlan L.R."/>
            <person name="Quaggio R.B."/>
            <person name="Monteiro-Vitorello C.B."/>
            <person name="Van Sluys M.A."/>
            <person name="Almeida N.F. Jr."/>
            <person name="Alves L.M.C."/>
            <person name="do Amaral A.M."/>
            <person name="Bertolini M.C."/>
            <person name="Camargo L.E.A."/>
            <person name="Camarotte G."/>
            <person name="Cannavan F."/>
            <person name="Cardozo J."/>
            <person name="Chambergo F."/>
            <person name="Ciapina L.P."/>
            <person name="Cicarelli R.M.B."/>
            <person name="Coutinho L.L."/>
            <person name="Cursino-Santos J.R."/>
            <person name="El-Dorry H."/>
            <person name="Faria J.B."/>
            <person name="Ferreira A.J.S."/>
            <person name="Ferreira R.C.C."/>
            <person name="Ferro M.I.T."/>
            <person name="Formighieri E.F."/>
            <person name="Franco M.C."/>
            <person name="Greggio C.C."/>
            <person name="Gruber A."/>
            <person name="Katsuyama A.M."/>
            <person name="Kishi L.T."/>
            <person name="Leite R.P."/>
            <person name="Lemos E.G.M."/>
            <person name="Lemos M.V.F."/>
            <person name="Locali E.C."/>
            <person name="Machado M.A."/>
            <person name="Madeira A.M.B.N."/>
            <person name="Martinez-Rossi N.M."/>
            <person name="Martins E.C."/>
            <person name="Meidanis J."/>
            <person name="Menck C.F.M."/>
            <person name="Miyaki C.Y."/>
            <person name="Moon D.H."/>
            <person name="Moreira L.M."/>
            <person name="Novo M.T.M."/>
            <person name="Okura V.K."/>
            <person name="Oliveira M.C."/>
            <person name="Oliveira V.R."/>
            <person name="Pereira H.A."/>
            <person name="Rossi A."/>
            <person name="Sena J.A.D."/>
            <person name="Silva C."/>
            <person name="de Souza R.F."/>
            <person name="Spinola L.A.F."/>
            <person name="Takita M.A."/>
            <person name="Tamura R.E."/>
            <person name="Teixeira E.C."/>
            <person name="Tezza R.I.D."/>
            <person name="Trindade dos Santos M."/>
            <person name="Truffi D."/>
            <person name="Tsai S.M."/>
            <person name="White F.F."/>
            <person name="Setubal J.C."/>
            <person name="Kitajima J.P."/>
        </authorList>
    </citation>
    <scope>NUCLEOTIDE SEQUENCE [LARGE SCALE GENOMIC DNA]</scope>
    <source>
        <strain>ATCC 33913 / DSM 3586 / NCPPB 528 / LMG 568 / P 25</strain>
    </source>
</reference>
<comment type="function">
    <text evidence="1">Part of the ABC transporter complex LolCDE involved in the translocation of mature outer membrane-directed lipoproteins, from the inner membrane to the periplasmic chaperone, LolA. Responsible for the formation of the LolA-lipoprotein complex in an ATP-dependent manner.</text>
</comment>
<comment type="subunit">
    <text evidence="1">The complex is composed of two ATP-binding proteins (LolD) and two transmembrane proteins (LolC and LolE).</text>
</comment>
<comment type="subcellular location">
    <subcellularLocation>
        <location evidence="1">Cell inner membrane</location>
        <topology evidence="1">Peripheral membrane protein</topology>
    </subcellularLocation>
</comment>
<comment type="similarity">
    <text evidence="1">Belongs to the ABC transporter superfamily. Lipoprotein translocase (TC 3.A.1.125) family.</text>
</comment>
<comment type="sequence caution" evidence="2">
    <conflict type="erroneous initiation">
        <sequence resource="EMBL-CDS" id="AAM41410"/>
    </conflict>
</comment>
<evidence type="ECO:0000255" key="1">
    <source>
        <dbReference type="HAMAP-Rule" id="MF_01708"/>
    </source>
</evidence>
<evidence type="ECO:0000305" key="2"/>
<organism>
    <name type="scientific">Xanthomonas campestris pv. campestris (strain ATCC 33913 / DSM 3586 / NCPPB 528 / LMG 568 / P 25)</name>
    <dbReference type="NCBI Taxonomy" id="190485"/>
    <lineage>
        <taxon>Bacteria</taxon>
        <taxon>Pseudomonadati</taxon>
        <taxon>Pseudomonadota</taxon>
        <taxon>Gammaproteobacteria</taxon>
        <taxon>Lysobacterales</taxon>
        <taxon>Lysobacteraceae</taxon>
        <taxon>Xanthomonas</taxon>
    </lineage>
</organism>
<gene>
    <name evidence="1" type="primary">lolD</name>
    <name type="ordered locus">XCC2125</name>
</gene>
<keyword id="KW-0067">ATP-binding</keyword>
<keyword id="KW-0997">Cell inner membrane</keyword>
<keyword id="KW-1003">Cell membrane</keyword>
<keyword id="KW-0472">Membrane</keyword>
<keyword id="KW-0547">Nucleotide-binding</keyword>
<keyword id="KW-1185">Reference proteome</keyword>
<keyword id="KW-1278">Translocase</keyword>
<keyword id="KW-0813">Transport</keyword>
<sequence length="239" mass="25639">MLGKTQADQGAAVIRAERLGKTYAEGKMRTPVFDGLDLSVATGETVAIVGASGAGKSTLLHLLGGLDIPTSGEVYVAGRRMSALSDGERGKLRNRSLGFVYQFHHLLPEFTALENVMMPVLLSGQDVSIARGQALQLLESVGLGHRVEHKPSELSGGERQRCAVARALVNKPGCVLGDEPTGNLDDKTAGTVFELMLELNRAQRTSLVLVTHDRSLARRLDRVLELHQGKLRELAPSAV</sequence>
<proteinExistence type="inferred from homology"/>